<dbReference type="EMBL" id="AF216519">
    <property type="protein sequence ID" value="AAG08988.1"/>
    <property type="molecule type" value="mRNA"/>
</dbReference>
<dbReference type="SMR" id="Q9GZ70"/>
<dbReference type="Allergome" id="823">
    <property type="allergen name" value="Per v 1"/>
</dbReference>
<dbReference type="GO" id="GO:0042803">
    <property type="term" value="F:protein homodimerization activity"/>
    <property type="evidence" value="ECO:0000250"/>
    <property type="project" value="UniProtKB"/>
</dbReference>
<dbReference type="GO" id="GO:0006937">
    <property type="term" value="P:regulation of muscle contraction"/>
    <property type="evidence" value="ECO:0000250"/>
    <property type="project" value="UniProtKB"/>
</dbReference>
<dbReference type="FunFam" id="1.20.5.170:FF:000001">
    <property type="entry name" value="Tropomyosin alpha-1 chain isoform 1"/>
    <property type="match status" value="1"/>
</dbReference>
<dbReference type="FunFam" id="1.20.5.340:FF:000001">
    <property type="entry name" value="Tropomyosin alpha-1 chain isoform 2"/>
    <property type="match status" value="1"/>
</dbReference>
<dbReference type="Gene3D" id="1.20.5.170">
    <property type="match status" value="2"/>
</dbReference>
<dbReference type="Gene3D" id="1.20.5.340">
    <property type="match status" value="1"/>
</dbReference>
<dbReference type="InterPro" id="IPR000533">
    <property type="entry name" value="Tropomyosin"/>
</dbReference>
<dbReference type="PANTHER" id="PTHR19269">
    <property type="entry name" value="TROPOMYOSIN"/>
    <property type="match status" value="1"/>
</dbReference>
<dbReference type="Pfam" id="PF00261">
    <property type="entry name" value="Tropomyosin"/>
    <property type="match status" value="1"/>
</dbReference>
<dbReference type="PRINTS" id="PR00194">
    <property type="entry name" value="TROPOMYOSIN"/>
</dbReference>
<dbReference type="SUPFAM" id="SSF57997">
    <property type="entry name" value="Tropomyosin"/>
    <property type="match status" value="1"/>
</dbReference>
<dbReference type="PROSITE" id="PS00326">
    <property type="entry name" value="TROPOMYOSIN"/>
    <property type="match status" value="1"/>
</dbReference>
<comment type="function">
    <text evidence="2">Tropomyosin, in association with the troponin complex, plays a central role in the calcium dependent regulation of muscle contraction.</text>
</comment>
<comment type="subunit">
    <text evidence="1">Homodimer.</text>
</comment>
<comment type="domain">
    <text evidence="7">The molecule is in a coiled coil structure that is formed by 2 polypeptide chains. The sequence exhibits a prominent seven-residues periodicity.</text>
</comment>
<comment type="allergen">
    <text evidence="5">Causes an allergic reaction in human. Binds to IgE of patients allergic to shellfish (mollusks and crustaceans).</text>
</comment>
<comment type="similarity">
    <text evidence="7">Belongs to the tropomyosin family.</text>
</comment>
<accession>Q9GZ70</accession>
<name>TPM_PERVI</name>
<feature type="chain" id="PRO_0000205671" description="Tropomyosin">
    <location>
        <begin position="1"/>
        <end position="284"/>
    </location>
</feature>
<feature type="region of interest" description="Disordered" evidence="4">
    <location>
        <begin position="110"/>
        <end position="134"/>
    </location>
</feature>
<feature type="coiled-coil region" evidence="3">
    <location>
        <begin position="1"/>
        <end position="273"/>
    </location>
</feature>
<feature type="compositionally biased region" description="Basic and acidic residues" evidence="4">
    <location>
        <begin position="110"/>
        <end position="130"/>
    </location>
</feature>
<reference key="1">
    <citation type="journal article" date="2000" name="Mar. Biotechnol.">
        <title>Tropomyosin Is the Major Mollusk Allergen: Reverse Transcriptase Polymerase Chain Reaction, Expression and IgE Reactivity.</title>
        <authorList>
            <person name="Chu K.H."/>
            <person name="Wong S.H."/>
            <person name="Leung P.S."/>
        </authorList>
    </citation>
    <scope>NUCLEOTIDE SEQUENCE [MRNA]</scope>
    <scope>ALLERGEN</scope>
    <source>
        <tissue evidence="6">Adductor muscle</tissue>
    </source>
</reference>
<protein>
    <recommendedName>
        <fullName evidence="6">Tropomyosin</fullName>
    </recommendedName>
    <allergenName evidence="6">Per v 1</allergenName>
</protein>
<keyword id="KW-0020">Allergen</keyword>
<keyword id="KW-0175">Coiled coil</keyword>
<keyword id="KW-0514">Muscle protein</keyword>
<keyword id="KW-0677">Repeat</keyword>
<proteinExistence type="evidence at protein level"/>
<sequence length="284" mass="32749">MDAIKKKMVAMKMEKKNALDRAEQLEQKLRETEEAKAKIEDDYNSLVKKNIQTENDYDNCNTQLQDVQAKYERAEKQIQEHEQEIQSLTRKISLLEEGIMKAEERFTTASGKLEEASKAADESERNRKVLENLNSGNDERIDQLEKQLTEAKWIAEEADKKYEEAARKLAITEVDLERAEARLEAAEAKVIDLEEQLTVVGANIKTLQVQNDQASQREDSYEETIRDLTNRLKDAENRATEAERTVSKLQKEVDRLEDELLTEKEKYKAISDELDATFAELAGY</sequence>
<organism>
    <name type="scientific">Perna viridis</name>
    <name type="common">Asian green mussel</name>
    <name type="synonym">Mytilus viridis</name>
    <dbReference type="NCBI Taxonomy" id="73031"/>
    <lineage>
        <taxon>Eukaryota</taxon>
        <taxon>Metazoa</taxon>
        <taxon>Spiralia</taxon>
        <taxon>Lophotrochozoa</taxon>
        <taxon>Mollusca</taxon>
        <taxon>Bivalvia</taxon>
        <taxon>Autobranchia</taxon>
        <taxon>Pteriomorphia</taxon>
        <taxon>Mytilida</taxon>
        <taxon>Mytiloidea</taxon>
        <taxon>Mytilidae</taxon>
        <taxon>Mytilinae</taxon>
        <taxon>Perna</taxon>
    </lineage>
</organism>
<evidence type="ECO:0000250" key="1">
    <source>
        <dbReference type="UniProtKB" id="A2V735"/>
    </source>
</evidence>
<evidence type="ECO:0000250" key="2">
    <source>
        <dbReference type="UniProtKB" id="Q22866"/>
    </source>
</evidence>
<evidence type="ECO:0000255" key="3"/>
<evidence type="ECO:0000256" key="4">
    <source>
        <dbReference type="SAM" id="MobiDB-lite"/>
    </source>
</evidence>
<evidence type="ECO:0000269" key="5">
    <source>
    </source>
</evidence>
<evidence type="ECO:0000303" key="6">
    <source>
    </source>
</evidence>
<evidence type="ECO:0000305" key="7"/>